<gene>
    <name evidence="1" type="primary">coaX</name>
    <name type="ordered locus">TTHA1374</name>
</gene>
<comment type="function">
    <text evidence="1">Catalyzes the phosphorylation of pantothenate (Pan), the first step in CoA biosynthesis.</text>
</comment>
<comment type="catalytic activity">
    <reaction evidence="1">
        <text>(R)-pantothenate + ATP = (R)-4'-phosphopantothenate + ADP + H(+)</text>
        <dbReference type="Rhea" id="RHEA:16373"/>
        <dbReference type="ChEBI" id="CHEBI:10986"/>
        <dbReference type="ChEBI" id="CHEBI:15378"/>
        <dbReference type="ChEBI" id="CHEBI:29032"/>
        <dbReference type="ChEBI" id="CHEBI:30616"/>
        <dbReference type="ChEBI" id="CHEBI:456216"/>
        <dbReference type="EC" id="2.7.1.33"/>
    </reaction>
</comment>
<comment type="cofactor">
    <cofactor evidence="1">
        <name>NH4(+)</name>
        <dbReference type="ChEBI" id="CHEBI:28938"/>
    </cofactor>
    <cofactor evidence="1">
        <name>K(+)</name>
        <dbReference type="ChEBI" id="CHEBI:29103"/>
    </cofactor>
    <text evidence="1">A monovalent cation. Ammonium or potassium.</text>
</comment>
<comment type="pathway">
    <text evidence="1">Cofactor biosynthesis; coenzyme A biosynthesis; CoA from (R)-pantothenate: step 1/5.</text>
</comment>
<comment type="subunit">
    <text evidence="1">Homodimer.</text>
</comment>
<comment type="subcellular location">
    <subcellularLocation>
        <location evidence="1">Cytoplasm</location>
    </subcellularLocation>
</comment>
<comment type="similarity">
    <text evidence="1">Belongs to the type III pantothenate kinase family.</text>
</comment>
<evidence type="ECO:0000255" key="1">
    <source>
        <dbReference type="HAMAP-Rule" id="MF_01274"/>
    </source>
</evidence>
<proteinExistence type="inferred from homology"/>
<dbReference type="EC" id="2.7.1.33" evidence="1"/>
<dbReference type="EMBL" id="AP008226">
    <property type="protein sequence ID" value="BAD71197.1"/>
    <property type="molecule type" value="Genomic_DNA"/>
</dbReference>
<dbReference type="RefSeq" id="WP_011228633.1">
    <property type="nucleotide sequence ID" value="NC_006461.1"/>
</dbReference>
<dbReference type="RefSeq" id="YP_144640.1">
    <property type="nucleotide sequence ID" value="NC_006461.1"/>
</dbReference>
<dbReference type="SMR" id="Q5SIJ5"/>
<dbReference type="EnsemblBacteria" id="BAD71197">
    <property type="protein sequence ID" value="BAD71197"/>
    <property type="gene ID" value="BAD71197"/>
</dbReference>
<dbReference type="GeneID" id="3169319"/>
<dbReference type="KEGG" id="ttj:TTHA1374"/>
<dbReference type="PATRIC" id="fig|300852.9.peg.1350"/>
<dbReference type="eggNOG" id="COG1521">
    <property type="taxonomic scope" value="Bacteria"/>
</dbReference>
<dbReference type="HOGENOM" id="CLU_066627_1_0_0"/>
<dbReference type="PhylomeDB" id="Q5SIJ5"/>
<dbReference type="UniPathway" id="UPA00241">
    <property type="reaction ID" value="UER00352"/>
</dbReference>
<dbReference type="Proteomes" id="UP000000532">
    <property type="component" value="Chromosome"/>
</dbReference>
<dbReference type="GO" id="GO:0005737">
    <property type="term" value="C:cytoplasm"/>
    <property type="evidence" value="ECO:0007669"/>
    <property type="project" value="UniProtKB-SubCell"/>
</dbReference>
<dbReference type="GO" id="GO:0005524">
    <property type="term" value="F:ATP binding"/>
    <property type="evidence" value="ECO:0007669"/>
    <property type="project" value="UniProtKB-UniRule"/>
</dbReference>
<dbReference type="GO" id="GO:0046872">
    <property type="term" value="F:metal ion binding"/>
    <property type="evidence" value="ECO:0007669"/>
    <property type="project" value="UniProtKB-KW"/>
</dbReference>
<dbReference type="GO" id="GO:0004594">
    <property type="term" value="F:pantothenate kinase activity"/>
    <property type="evidence" value="ECO:0007669"/>
    <property type="project" value="UniProtKB-UniRule"/>
</dbReference>
<dbReference type="GO" id="GO:0015937">
    <property type="term" value="P:coenzyme A biosynthetic process"/>
    <property type="evidence" value="ECO:0007669"/>
    <property type="project" value="UniProtKB-UniRule"/>
</dbReference>
<dbReference type="CDD" id="cd24015">
    <property type="entry name" value="ASKHA_NBD_PanK-III"/>
    <property type="match status" value="1"/>
</dbReference>
<dbReference type="Gene3D" id="3.30.420.40">
    <property type="match status" value="2"/>
</dbReference>
<dbReference type="HAMAP" id="MF_01274">
    <property type="entry name" value="Pantothen_kinase_3"/>
    <property type="match status" value="1"/>
</dbReference>
<dbReference type="InterPro" id="IPR043129">
    <property type="entry name" value="ATPase_NBD"/>
</dbReference>
<dbReference type="InterPro" id="IPR004619">
    <property type="entry name" value="Type_III_PanK"/>
</dbReference>
<dbReference type="NCBIfam" id="TIGR00671">
    <property type="entry name" value="baf"/>
    <property type="match status" value="1"/>
</dbReference>
<dbReference type="NCBIfam" id="NF009848">
    <property type="entry name" value="PRK13318.1-6"/>
    <property type="match status" value="1"/>
</dbReference>
<dbReference type="NCBIfam" id="NF009855">
    <property type="entry name" value="PRK13321.1"/>
    <property type="match status" value="1"/>
</dbReference>
<dbReference type="PANTHER" id="PTHR34265">
    <property type="entry name" value="TYPE III PANTOTHENATE KINASE"/>
    <property type="match status" value="1"/>
</dbReference>
<dbReference type="PANTHER" id="PTHR34265:SF1">
    <property type="entry name" value="TYPE III PANTOTHENATE KINASE"/>
    <property type="match status" value="1"/>
</dbReference>
<dbReference type="Pfam" id="PF03309">
    <property type="entry name" value="Pan_kinase"/>
    <property type="match status" value="1"/>
</dbReference>
<dbReference type="SUPFAM" id="SSF53067">
    <property type="entry name" value="Actin-like ATPase domain"/>
    <property type="match status" value="2"/>
</dbReference>
<organism>
    <name type="scientific">Thermus thermophilus (strain ATCC 27634 / DSM 579 / HB8)</name>
    <dbReference type="NCBI Taxonomy" id="300852"/>
    <lineage>
        <taxon>Bacteria</taxon>
        <taxon>Thermotogati</taxon>
        <taxon>Deinococcota</taxon>
        <taxon>Deinococci</taxon>
        <taxon>Thermales</taxon>
        <taxon>Thermaceae</taxon>
        <taxon>Thermus</taxon>
    </lineage>
</organism>
<reference key="1">
    <citation type="submission" date="2004-11" db="EMBL/GenBank/DDBJ databases">
        <title>Complete genome sequence of Thermus thermophilus HB8.</title>
        <authorList>
            <person name="Masui R."/>
            <person name="Kurokawa K."/>
            <person name="Nakagawa N."/>
            <person name="Tokunaga F."/>
            <person name="Koyama Y."/>
            <person name="Shibata T."/>
            <person name="Oshima T."/>
            <person name="Yokoyama S."/>
            <person name="Yasunaga T."/>
            <person name="Kuramitsu S."/>
        </authorList>
    </citation>
    <scope>NUCLEOTIDE SEQUENCE [LARGE SCALE GENOMIC DNA]</scope>
    <source>
        <strain>ATCC 27634 / DSM 579 / HB8</strain>
    </source>
</reference>
<name>COAX_THET8</name>
<feature type="chain" id="PRO_0000267600" description="Type III pantothenate kinase">
    <location>
        <begin position="1"/>
        <end position="252"/>
    </location>
</feature>
<feature type="active site" description="Proton acceptor" evidence="1">
    <location>
        <position position="106"/>
    </location>
</feature>
<feature type="binding site" evidence="1">
    <location>
        <begin position="6"/>
        <end position="13"/>
    </location>
    <ligand>
        <name>ATP</name>
        <dbReference type="ChEBI" id="CHEBI:30616"/>
    </ligand>
</feature>
<feature type="binding site" evidence="1">
    <location>
        <begin position="104"/>
        <end position="107"/>
    </location>
    <ligand>
        <name>substrate</name>
    </ligand>
</feature>
<feature type="binding site" evidence="1">
    <location>
        <position position="128"/>
    </location>
    <ligand>
        <name>K(+)</name>
        <dbReference type="ChEBI" id="CHEBI:29103"/>
    </ligand>
</feature>
<feature type="binding site" evidence="1">
    <location>
        <position position="131"/>
    </location>
    <ligand>
        <name>ATP</name>
        <dbReference type="ChEBI" id="CHEBI:30616"/>
    </ligand>
</feature>
<feature type="binding site" evidence="1">
    <location>
        <position position="183"/>
    </location>
    <ligand>
        <name>substrate</name>
    </ligand>
</feature>
<protein>
    <recommendedName>
        <fullName evidence="1">Type III pantothenate kinase</fullName>
        <ecNumber evidence="1">2.7.1.33</ecNumber>
    </recommendedName>
    <alternativeName>
        <fullName evidence="1">PanK-III</fullName>
    </alternativeName>
    <alternativeName>
        <fullName evidence="1">Pantothenic acid kinase</fullName>
    </alternativeName>
</protein>
<accession>Q5SIJ5</accession>
<sequence>MLLAVDIGNTSTALGLFSGEELIAHFRIHTDRMRMESEYRVILKNLFALEDLPPPKAALLASVVPPVEREMKRAIERLFGVEARVVEAADTGLEVLIDNPREAGADRLVNAVGALAYPSPTGRYIVVDFGTATTFDLVEAPNRYLGGAIAIGPQTAADALAQRTAKLPRIDLTPPKAAVGKNTLEALRSGLVLGYAALVEGMVRRFKEEAGEALVIATGGFAETLRPLCPCFDVVDEDLTLKGLLRIHLGRG</sequence>
<keyword id="KW-0067">ATP-binding</keyword>
<keyword id="KW-0173">Coenzyme A biosynthesis</keyword>
<keyword id="KW-0963">Cytoplasm</keyword>
<keyword id="KW-0418">Kinase</keyword>
<keyword id="KW-0479">Metal-binding</keyword>
<keyword id="KW-0547">Nucleotide-binding</keyword>
<keyword id="KW-0630">Potassium</keyword>
<keyword id="KW-1185">Reference proteome</keyword>
<keyword id="KW-0808">Transferase</keyword>